<comment type="function">
    <text evidence="1">Non-essential, abundant cell division factor that is required for proper Z-ring formation. It is recruited early to the divisome by direct interaction with FtsZ, stimulating Z-ring assembly and thereby promoting cell division earlier in the cell cycle. Its recruitment to the Z-ring requires functional FtsA or ZipA.</text>
</comment>
<comment type="subunit">
    <text evidence="1">Homodimer. The ends of the coiled-coil dimer bind to each other, forming polymers. Interacts with FtsZ.</text>
</comment>
<comment type="subcellular location">
    <subcellularLocation>
        <location>Cytoplasm</location>
    </subcellularLocation>
    <text evidence="1">Localizes to the septum at mid-cell, in a FtsZ-like pattern.</text>
</comment>
<comment type="similarity">
    <text evidence="1">Belongs to the ZapB family.</text>
</comment>
<sequence length="73" mass="8381">MSLELLSKLETKIQATLETIELLKMELEEEKQKSSTLSEHNQQLNEQNQQLQQELASWNEKVTGLVGLLNSEI</sequence>
<accession>A1RPK5</accession>
<organism>
    <name type="scientific">Shewanella sp. (strain W3-18-1)</name>
    <dbReference type="NCBI Taxonomy" id="351745"/>
    <lineage>
        <taxon>Bacteria</taxon>
        <taxon>Pseudomonadati</taxon>
        <taxon>Pseudomonadota</taxon>
        <taxon>Gammaproteobacteria</taxon>
        <taxon>Alteromonadales</taxon>
        <taxon>Shewanellaceae</taxon>
        <taxon>Shewanella</taxon>
    </lineage>
</organism>
<reference key="1">
    <citation type="submission" date="2006-12" db="EMBL/GenBank/DDBJ databases">
        <title>Complete sequence of Shewanella sp. W3-18-1.</title>
        <authorList>
            <consortium name="US DOE Joint Genome Institute"/>
            <person name="Copeland A."/>
            <person name="Lucas S."/>
            <person name="Lapidus A."/>
            <person name="Barry K."/>
            <person name="Detter J.C."/>
            <person name="Glavina del Rio T."/>
            <person name="Hammon N."/>
            <person name="Israni S."/>
            <person name="Dalin E."/>
            <person name="Tice H."/>
            <person name="Pitluck S."/>
            <person name="Chain P."/>
            <person name="Malfatti S."/>
            <person name="Shin M."/>
            <person name="Vergez L."/>
            <person name="Schmutz J."/>
            <person name="Larimer F."/>
            <person name="Land M."/>
            <person name="Hauser L."/>
            <person name="Kyrpides N."/>
            <person name="Lykidis A."/>
            <person name="Tiedje J."/>
            <person name="Richardson P."/>
        </authorList>
    </citation>
    <scope>NUCLEOTIDE SEQUENCE [LARGE SCALE GENOMIC DNA]</scope>
    <source>
        <strain>W3-18-1</strain>
    </source>
</reference>
<feature type="chain" id="PRO_0000333932" description="Cell division protein ZapB">
    <location>
        <begin position="1"/>
        <end position="73"/>
    </location>
</feature>
<feature type="region of interest" description="Disordered" evidence="2">
    <location>
        <begin position="30"/>
        <end position="50"/>
    </location>
</feature>
<feature type="coiled-coil region" evidence="1">
    <location>
        <begin position="3"/>
        <end position="69"/>
    </location>
</feature>
<feature type="compositionally biased region" description="Low complexity" evidence="2">
    <location>
        <begin position="41"/>
        <end position="50"/>
    </location>
</feature>
<evidence type="ECO:0000255" key="1">
    <source>
        <dbReference type="HAMAP-Rule" id="MF_01196"/>
    </source>
</evidence>
<evidence type="ECO:0000256" key="2">
    <source>
        <dbReference type="SAM" id="MobiDB-lite"/>
    </source>
</evidence>
<protein>
    <recommendedName>
        <fullName evidence="1">Cell division protein ZapB</fullName>
    </recommendedName>
</protein>
<proteinExistence type="inferred from homology"/>
<keyword id="KW-0131">Cell cycle</keyword>
<keyword id="KW-0132">Cell division</keyword>
<keyword id="KW-0175">Coiled coil</keyword>
<keyword id="KW-0963">Cytoplasm</keyword>
<keyword id="KW-0717">Septation</keyword>
<name>ZAPB_SHESW</name>
<gene>
    <name evidence="1" type="primary">zapB</name>
    <name type="ordered locus">Sputw3181_3795</name>
</gene>
<dbReference type="EMBL" id="CP000503">
    <property type="protein sequence ID" value="ABM26600.1"/>
    <property type="molecule type" value="Genomic_DNA"/>
</dbReference>
<dbReference type="RefSeq" id="WP_011791028.1">
    <property type="nucleotide sequence ID" value="NC_008750.1"/>
</dbReference>
<dbReference type="SMR" id="A1RPK5"/>
<dbReference type="KEGG" id="shw:Sputw3181_3795"/>
<dbReference type="HOGENOM" id="CLU_171174_1_0_6"/>
<dbReference type="Proteomes" id="UP000002597">
    <property type="component" value="Chromosome"/>
</dbReference>
<dbReference type="GO" id="GO:0005737">
    <property type="term" value="C:cytoplasm"/>
    <property type="evidence" value="ECO:0007669"/>
    <property type="project" value="UniProtKB-SubCell"/>
</dbReference>
<dbReference type="GO" id="GO:0000917">
    <property type="term" value="P:division septum assembly"/>
    <property type="evidence" value="ECO:0007669"/>
    <property type="project" value="UniProtKB-KW"/>
</dbReference>
<dbReference type="GO" id="GO:0043093">
    <property type="term" value="P:FtsZ-dependent cytokinesis"/>
    <property type="evidence" value="ECO:0007669"/>
    <property type="project" value="UniProtKB-UniRule"/>
</dbReference>
<dbReference type="Gene3D" id="1.20.5.340">
    <property type="match status" value="1"/>
</dbReference>
<dbReference type="HAMAP" id="MF_01196">
    <property type="entry name" value="ZapB"/>
    <property type="match status" value="1"/>
</dbReference>
<dbReference type="InterPro" id="IPR009252">
    <property type="entry name" value="Cell_div_ZapB"/>
</dbReference>
<dbReference type="Pfam" id="PF06005">
    <property type="entry name" value="ZapB"/>
    <property type="match status" value="1"/>
</dbReference>